<dbReference type="EC" id="2.7.12.1"/>
<dbReference type="EMBL" id="AE014135">
    <property type="protein sequence ID" value="ABC65837.1"/>
    <property type="molecule type" value="Genomic_DNA"/>
</dbReference>
<dbReference type="EMBL" id="AE014135">
    <property type="protein sequence ID" value="ABC65839.1"/>
    <property type="molecule type" value="Genomic_DNA"/>
</dbReference>
<dbReference type="EMBL" id="AE014135">
    <property type="protein sequence ID" value="ABC65840.1"/>
    <property type="molecule type" value="Genomic_DNA"/>
</dbReference>
<dbReference type="EMBL" id="AE014135">
    <property type="protein sequence ID" value="ABC65841.1"/>
    <property type="molecule type" value="Genomic_DNA"/>
</dbReference>
<dbReference type="EMBL" id="AY118401">
    <property type="protein sequence ID" value="AAM48430.1"/>
    <property type="molecule type" value="mRNA"/>
</dbReference>
<dbReference type="EMBL" id="AF103941">
    <property type="protein sequence ID" value="AAD39356.1"/>
    <property type="status" value="ALT_SEQ"/>
    <property type="molecule type" value="Genomic_DNA"/>
</dbReference>
<dbReference type="RefSeq" id="NP_001033810.1">
    <property type="nucleotide sequence ID" value="NM_001038721.2"/>
</dbReference>
<dbReference type="RefSeq" id="NP_001033812.1">
    <property type="nucleotide sequence ID" value="NM_001038723.2"/>
</dbReference>
<dbReference type="RefSeq" id="NP_001033814.1">
    <property type="nucleotide sequence ID" value="NM_001038725.2"/>
</dbReference>
<dbReference type="SMR" id="P83102"/>
<dbReference type="ELM" id="P83102"/>
<dbReference type="FunCoup" id="P83102">
    <property type="interactions" value="247"/>
</dbReference>
<dbReference type="STRING" id="7227.FBpp0099820"/>
<dbReference type="iPTMnet" id="P83102"/>
<dbReference type="PaxDb" id="7227-FBpp0099820"/>
<dbReference type="DNASU" id="3885567"/>
<dbReference type="EnsemblMetazoa" id="FBtr0100402">
    <property type="protein sequence ID" value="FBpp0099816"/>
    <property type="gene ID" value="FBgn0027101"/>
</dbReference>
<dbReference type="EnsemblMetazoa" id="FBtr0100404">
    <property type="protein sequence ID" value="FBpp0099818"/>
    <property type="gene ID" value="FBgn0027101"/>
</dbReference>
<dbReference type="EnsemblMetazoa" id="FBtr0100406">
    <property type="protein sequence ID" value="FBpp0099820"/>
    <property type="gene ID" value="FBgn0027101"/>
</dbReference>
<dbReference type="GeneID" id="3885567"/>
<dbReference type="KEGG" id="dme:Dmel_CG40478"/>
<dbReference type="UCSC" id="CG40478-RA">
    <property type="organism name" value="d. melanogaster"/>
</dbReference>
<dbReference type="AGR" id="FB:FBgn0027101"/>
<dbReference type="CTD" id="8444"/>
<dbReference type="FlyBase" id="FBgn0027101">
    <property type="gene designation" value="Dyrk3"/>
</dbReference>
<dbReference type="VEuPathDB" id="VectorBase:FBgn0027101"/>
<dbReference type="eggNOG" id="KOG0667">
    <property type="taxonomic scope" value="Eukaryota"/>
</dbReference>
<dbReference type="GeneTree" id="ENSGT00940000166363"/>
<dbReference type="HOGENOM" id="CLU_000288_5_4_1"/>
<dbReference type="InParanoid" id="P83102"/>
<dbReference type="OMA" id="INQNSTH"/>
<dbReference type="OrthoDB" id="9332038at2759"/>
<dbReference type="PhylomeDB" id="P83102"/>
<dbReference type="Reactome" id="R-DME-6804756">
    <property type="pathway name" value="Regulation of TP53 Activity through Phosphorylation"/>
</dbReference>
<dbReference type="BioGRID-ORCS" id="3885567">
    <property type="hits" value="0 hits in 3 CRISPR screens"/>
</dbReference>
<dbReference type="GenomeRNAi" id="3885567"/>
<dbReference type="PRO" id="PR:P83102"/>
<dbReference type="Proteomes" id="UP000000803">
    <property type="component" value="Chromosome 4"/>
</dbReference>
<dbReference type="Bgee" id="FBgn0027101">
    <property type="expression patterns" value="Expressed in distal medullary amacrine neuron Dm11 in insect head and 282 other cell types or tissues"/>
</dbReference>
<dbReference type="GO" id="GO:0005737">
    <property type="term" value="C:cytoplasm"/>
    <property type="evidence" value="ECO:0000318"/>
    <property type="project" value="GO_Central"/>
</dbReference>
<dbReference type="GO" id="GO:0005856">
    <property type="term" value="C:cytoskeleton"/>
    <property type="evidence" value="ECO:0000318"/>
    <property type="project" value="GO_Central"/>
</dbReference>
<dbReference type="GO" id="GO:0005634">
    <property type="term" value="C:nucleus"/>
    <property type="evidence" value="ECO:0000318"/>
    <property type="project" value="GO_Central"/>
</dbReference>
<dbReference type="GO" id="GO:0005524">
    <property type="term" value="F:ATP binding"/>
    <property type="evidence" value="ECO:0007669"/>
    <property type="project" value="UniProtKB-KW"/>
</dbReference>
<dbReference type="GO" id="GO:0106310">
    <property type="term" value="F:protein serine kinase activity"/>
    <property type="evidence" value="ECO:0007669"/>
    <property type="project" value="RHEA"/>
</dbReference>
<dbReference type="GO" id="GO:0004674">
    <property type="term" value="F:protein serine/threonine kinase activity"/>
    <property type="evidence" value="ECO:0000318"/>
    <property type="project" value="GO_Central"/>
</dbReference>
<dbReference type="GO" id="GO:0004712">
    <property type="term" value="F:protein serine/threonine/tyrosine kinase activity"/>
    <property type="evidence" value="ECO:0000250"/>
    <property type="project" value="FlyBase"/>
</dbReference>
<dbReference type="GO" id="GO:0004713">
    <property type="term" value="F:protein tyrosine kinase activity"/>
    <property type="evidence" value="ECO:0007669"/>
    <property type="project" value="UniProtKB-KW"/>
</dbReference>
<dbReference type="CDD" id="cd14224">
    <property type="entry name" value="PKc_DYRK2_3"/>
    <property type="match status" value="1"/>
</dbReference>
<dbReference type="FunFam" id="1.10.510.10:FF:000112">
    <property type="entry name" value="Putative dual specificity tyrosine-phosphorylation-regulated kinase 2"/>
    <property type="match status" value="1"/>
</dbReference>
<dbReference type="FunFam" id="3.30.200.20:FF:000127">
    <property type="entry name" value="Putative dual specificity tyrosine-phosphorylation-regulated kinase 2"/>
    <property type="match status" value="1"/>
</dbReference>
<dbReference type="Gene3D" id="3.30.10.30">
    <property type="entry name" value="DYRK"/>
    <property type="match status" value="1"/>
</dbReference>
<dbReference type="Gene3D" id="3.30.200.20">
    <property type="entry name" value="Phosphorylase Kinase, domain 1"/>
    <property type="match status" value="1"/>
</dbReference>
<dbReference type="Gene3D" id="1.10.510.10">
    <property type="entry name" value="Transferase(Phosphotransferase) domain 1"/>
    <property type="match status" value="1"/>
</dbReference>
<dbReference type="InterPro" id="IPR042521">
    <property type="entry name" value="DYRK"/>
</dbReference>
<dbReference type="InterPro" id="IPR011009">
    <property type="entry name" value="Kinase-like_dom_sf"/>
</dbReference>
<dbReference type="InterPro" id="IPR000719">
    <property type="entry name" value="Prot_kinase_dom"/>
</dbReference>
<dbReference type="InterPro" id="IPR017441">
    <property type="entry name" value="Protein_kinase_ATP_BS"/>
</dbReference>
<dbReference type="InterPro" id="IPR008271">
    <property type="entry name" value="Ser/Thr_kinase_AS"/>
</dbReference>
<dbReference type="InterPro" id="IPR050494">
    <property type="entry name" value="Ser_Thr_dual-spec_kinase"/>
</dbReference>
<dbReference type="PANTHER" id="PTHR24058">
    <property type="entry name" value="DUAL SPECIFICITY PROTEIN KINASE"/>
    <property type="match status" value="1"/>
</dbReference>
<dbReference type="PANTHER" id="PTHR24058:SF112">
    <property type="entry name" value="DUAL SPECIFICITY TYROSINE-PHOSPHORYLATION-REGULATED KINASE 3 HOMOLOG-RELATED"/>
    <property type="match status" value="1"/>
</dbReference>
<dbReference type="Pfam" id="PF00069">
    <property type="entry name" value="Pkinase"/>
    <property type="match status" value="1"/>
</dbReference>
<dbReference type="SMART" id="SM00220">
    <property type="entry name" value="S_TKc"/>
    <property type="match status" value="1"/>
</dbReference>
<dbReference type="SUPFAM" id="SSF56112">
    <property type="entry name" value="Protein kinase-like (PK-like)"/>
    <property type="match status" value="1"/>
</dbReference>
<dbReference type="PROSITE" id="PS00107">
    <property type="entry name" value="PROTEIN_KINASE_ATP"/>
    <property type="match status" value="1"/>
</dbReference>
<dbReference type="PROSITE" id="PS50011">
    <property type="entry name" value="PROTEIN_KINASE_DOM"/>
    <property type="match status" value="1"/>
</dbReference>
<dbReference type="PROSITE" id="PS00108">
    <property type="entry name" value="PROTEIN_KINASE_ST"/>
    <property type="match status" value="1"/>
</dbReference>
<sequence>MVGSQEKKNNHIELSETPATDKNNLNTTHLENTQLSKALSPPTSLPQIQIQMINQNLTHTGIAQNNTEKANRHQYRDSGLQYLTRCFEPLAMLNDSKEDFPTQPSNNIANYPGDIQILPIFDCCEISESIQAISLPNVTSPSKTKDVPGLFLRTISENSKSKSEPECESLISVKESSVMENHTFLFHEQIIMSGQQKCELHEKPKVLVVSPQQVMILYMNKLTPYERTEILTYPQIYFIGANAKKRPGVYGPNNSEYDNEQGAYIHVPHDHVAYRYEMLKIIGKGSFGQVIKAYDHKTHEHVALKIVRNEKRFHRQAQEEIRILHHLRRHDKYNTMNIIHMFDYFTFRNHTCITFELLSINLYELIKKNGFKGFSLQLVRKFAHSLLQCLDALYKNDIIHCDMKPENVLLKQQGRSGIKVIDFGSSCFENQRIYTYIQSRFYRAPEVILGGKYGRAIDMWSLGCILAELLSGHALFPGENESDQLACIIEVLGMPNKNILASSKRSKSFFSPKGYPRYCTVRTMSDGMVVLIGGQSRRGKQRGPPCSKSLSKALDGCKDPLFLNFIRGCLEWDADKRLTPSEALKHPWLRRRLPRPPSSSSGCGGVSGLCSSRNESPVTGQNRNFAAETTASSTSATSISLTIKRENSHSSLRLHHGAVPETDFKLIKSVPEGSSTATKEPMMNSDILPESFRQTTVVSPSKHSADSGGMSCLSAVDVGPSRYYPYMNNNENNRLFSSSLNSSANSLSHLEQATKLDALGEYSASTTPNLLSKNTGYSFNSGSINIDVAQESLVNIASNYALDKSIDIIGKSNVSLHTNKLKVQSKDM</sequence>
<protein>
    <recommendedName>
        <fullName>Putative dual specificity tyrosine-phosphorylation-regulated kinase 3 homolog</fullName>
        <ecNumber>2.7.12.1</ecNumber>
    </recommendedName>
</protein>
<comment type="catalytic activity">
    <reaction>
        <text>L-seryl-[protein] + ATP = O-phospho-L-seryl-[protein] + ADP + H(+)</text>
        <dbReference type="Rhea" id="RHEA:17989"/>
        <dbReference type="Rhea" id="RHEA-COMP:9863"/>
        <dbReference type="Rhea" id="RHEA-COMP:11604"/>
        <dbReference type="ChEBI" id="CHEBI:15378"/>
        <dbReference type="ChEBI" id="CHEBI:29999"/>
        <dbReference type="ChEBI" id="CHEBI:30616"/>
        <dbReference type="ChEBI" id="CHEBI:83421"/>
        <dbReference type="ChEBI" id="CHEBI:456216"/>
        <dbReference type="EC" id="2.7.12.1"/>
    </reaction>
</comment>
<comment type="catalytic activity">
    <reaction>
        <text>L-threonyl-[protein] + ATP = O-phospho-L-threonyl-[protein] + ADP + H(+)</text>
        <dbReference type="Rhea" id="RHEA:46608"/>
        <dbReference type="Rhea" id="RHEA-COMP:11060"/>
        <dbReference type="Rhea" id="RHEA-COMP:11605"/>
        <dbReference type="ChEBI" id="CHEBI:15378"/>
        <dbReference type="ChEBI" id="CHEBI:30013"/>
        <dbReference type="ChEBI" id="CHEBI:30616"/>
        <dbReference type="ChEBI" id="CHEBI:61977"/>
        <dbReference type="ChEBI" id="CHEBI:456216"/>
        <dbReference type="EC" id="2.7.12.1"/>
    </reaction>
</comment>
<comment type="catalytic activity">
    <reaction>
        <text>L-tyrosyl-[protein] + ATP = O-phospho-L-tyrosyl-[protein] + ADP + H(+)</text>
        <dbReference type="Rhea" id="RHEA:10596"/>
        <dbReference type="Rhea" id="RHEA-COMP:10136"/>
        <dbReference type="Rhea" id="RHEA-COMP:20101"/>
        <dbReference type="ChEBI" id="CHEBI:15378"/>
        <dbReference type="ChEBI" id="CHEBI:30616"/>
        <dbReference type="ChEBI" id="CHEBI:46858"/>
        <dbReference type="ChEBI" id="CHEBI:61978"/>
        <dbReference type="ChEBI" id="CHEBI:456216"/>
        <dbReference type="EC" id="2.7.12.1"/>
    </reaction>
</comment>
<comment type="PTM">
    <text evidence="1">Autophosphorylated on tyrosine residues.</text>
</comment>
<comment type="similarity">
    <text evidence="6">Belongs to the protein kinase superfamily. CMGC Ser/Thr protein kinase family. MNB/DYRK subfamily.</text>
</comment>
<comment type="sequence caution" evidence="6">
    <conflict type="miscellaneous discrepancy">
        <sequence resource="EMBL-CDS" id="AAD39356"/>
    </conflict>
    <text>Intron retention.</text>
</comment>
<name>DYRK3_DROME</name>
<evidence type="ECO:0000250" key="1"/>
<evidence type="ECO:0000255" key="2">
    <source>
        <dbReference type="PROSITE-ProRule" id="PRU00159"/>
    </source>
</evidence>
<evidence type="ECO:0000255" key="3">
    <source>
        <dbReference type="PROSITE-ProRule" id="PRU10027"/>
    </source>
</evidence>
<evidence type="ECO:0000256" key="4">
    <source>
        <dbReference type="SAM" id="MobiDB-lite"/>
    </source>
</evidence>
<evidence type="ECO:0000269" key="5">
    <source>
    </source>
</evidence>
<evidence type="ECO:0000305" key="6"/>
<feature type="chain" id="PRO_0000085939" description="Putative dual specificity tyrosine-phosphorylation-regulated kinase 3 homolog">
    <location>
        <begin position="1"/>
        <end position="828"/>
    </location>
</feature>
<feature type="domain" description="Protein kinase" evidence="2">
    <location>
        <begin position="276"/>
        <end position="589"/>
    </location>
</feature>
<feature type="region of interest" description="Disordered" evidence="4">
    <location>
        <begin position="1"/>
        <end position="26"/>
    </location>
</feature>
<feature type="compositionally biased region" description="Basic and acidic residues" evidence="4">
    <location>
        <begin position="1"/>
        <end position="14"/>
    </location>
</feature>
<feature type="compositionally biased region" description="Polar residues" evidence="4">
    <location>
        <begin position="17"/>
        <end position="26"/>
    </location>
</feature>
<feature type="active site" description="Proton acceptor" evidence="2 3">
    <location>
        <position position="402"/>
    </location>
</feature>
<feature type="binding site" evidence="2">
    <location>
        <begin position="282"/>
        <end position="290"/>
    </location>
    <ligand>
        <name>ATP</name>
        <dbReference type="ChEBI" id="CHEBI:30616"/>
    </ligand>
</feature>
<feature type="binding site" evidence="2">
    <location>
        <position position="305"/>
    </location>
    <ligand>
        <name>ATP</name>
        <dbReference type="ChEBI" id="CHEBI:30616"/>
    </ligand>
</feature>
<feature type="modified residue" description="Phosphoserine" evidence="5">
    <location>
        <position position="616"/>
    </location>
</feature>
<reference key="1">
    <citation type="journal article" date="2000" name="Science">
        <title>The genome sequence of Drosophila melanogaster.</title>
        <authorList>
            <person name="Adams M.D."/>
            <person name="Celniker S.E."/>
            <person name="Holt R.A."/>
            <person name="Evans C.A."/>
            <person name="Gocayne J.D."/>
            <person name="Amanatides P.G."/>
            <person name="Scherer S.E."/>
            <person name="Li P.W."/>
            <person name="Hoskins R.A."/>
            <person name="Galle R.F."/>
            <person name="George R.A."/>
            <person name="Lewis S.E."/>
            <person name="Richards S."/>
            <person name="Ashburner M."/>
            <person name="Henderson S.N."/>
            <person name="Sutton G.G."/>
            <person name="Wortman J.R."/>
            <person name="Yandell M.D."/>
            <person name="Zhang Q."/>
            <person name="Chen L.X."/>
            <person name="Brandon R.C."/>
            <person name="Rogers Y.-H.C."/>
            <person name="Blazej R.G."/>
            <person name="Champe M."/>
            <person name="Pfeiffer B.D."/>
            <person name="Wan K.H."/>
            <person name="Doyle C."/>
            <person name="Baxter E.G."/>
            <person name="Helt G."/>
            <person name="Nelson C.R."/>
            <person name="Miklos G.L.G."/>
            <person name="Abril J.F."/>
            <person name="Agbayani A."/>
            <person name="An H.-J."/>
            <person name="Andrews-Pfannkoch C."/>
            <person name="Baldwin D."/>
            <person name="Ballew R.M."/>
            <person name="Basu A."/>
            <person name="Baxendale J."/>
            <person name="Bayraktaroglu L."/>
            <person name="Beasley E.M."/>
            <person name="Beeson K.Y."/>
            <person name="Benos P.V."/>
            <person name="Berman B.P."/>
            <person name="Bhandari D."/>
            <person name="Bolshakov S."/>
            <person name="Borkova D."/>
            <person name="Botchan M.R."/>
            <person name="Bouck J."/>
            <person name="Brokstein P."/>
            <person name="Brottier P."/>
            <person name="Burtis K.C."/>
            <person name="Busam D.A."/>
            <person name="Butler H."/>
            <person name="Cadieu E."/>
            <person name="Center A."/>
            <person name="Chandra I."/>
            <person name="Cherry J.M."/>
            <person name="Cawley S."/>
            <person name="Dahlke C."/>
            <person name="Davenport L.B."/>
            <person name="Davies P."/>
            <person name="de Pablos B."/>
            <person name="Delcher A."/>
            <person name="Deng Z."/>
            <person name="Mays A.D."/>
            <person name="Dew I."/>
            <person name="Dietz S.M."/>
            <person name="Dodson K."/>
            <person name="Doup L.E."/>
            <person name="Downes M."/>
            <person name="Dugan-Rocha S."/>
            <person name="Dunkov B.C."/>
            <person name="Dunn P."/>
            <person name="Durbin K.J."/>
            <person name="Evangelista C.C."/>
            <person name="Ferraz C."/>
            <person name="Ferriera S."/>
            <person name="Fleischmann W."/>
            <person name="Fosler C."/>
            <person name="Gabrielian A.E."/>
            <person name="Garg N.S."/>
            <person name="Gelbart W.M."/>
            <person name="Glasser K."/>
            <person name="Glodek A."/>
            <person name="Gong F."/>
            <person name="Gorrell J.H."/>
            <person name="Gu Z."/>
            <person name="Guan P."/>
            <person name="Harris M."/>
            <person name="Harris N.L."/>
            <person name="Harvey D.A."/>
            <person name="Heiman T.J."/>
            <person name="Hernandez J.R."/>
            <person name="Houck J."/>
            <person name="Hostin D."/>
            <person name="Houston K.A."/>
            <person name="Howland T.J."/>
            <person name="Wei M.-H."/>
            <person name="Ibegwam C."/>
            <person name="Jalali M."/>
            <person name="Kalush F."/>
            <person name="Karpen G.H."/>
            <person name="Ke Z."/>
            <person name="Kennison J.A."/>
            <person name="Ketchum K.A."/>
            <person name="Kimmel B.E."/>
            <person name="Kodira C.D."/>
            <person name="Kraft C.L."/>
            <person name="Kravitz S."/>
            <person name="Kulp D."/>
            <person name="Lai Z."/>
            <person name="Lasko P."/>
            <person name="Lei Y."/>
            <person name="Levitsky A.A."/>
            <person name="Li J.H."/>
            <person name="Li Z."/>
            <person name="Liang Y."/>
            <person name="Lin X."/>
            <person name="Liu X."/>
            <person name="Mattei B."/>
            <person name="McIntosh T.C."/>
            <person name="McLeod M.P."/>
            <person name="McPherson D."/>
            <person name="Merkulov G."/>
            <person name="Milshina N.V."/>
            <person name="Mobarry C."/>
            <person name="Morris J."/>
            <person name="Moshrefi A."/>
            <person name="Mount S.M."/>
            <person name="Moy M."/>
            <person name="Murphy B."/>
            <person name="Murphy L."/>
            <person name="Muzny D.M."/>
            <person name="Nelson D.L."/>
            <person name="Nelson D.R."/>
            <person name="Nelson K.A."/>
            <person name="Nixon K."/>
            <person name="Nusskern D.R."/>
            <person name="Pacleb J.M."/>
            <person name="Palazzolo M."/>
            <person name="Pittman G.S."/>
            <person name="Pan S."/>
            <person name="Pollard J."/>
            <person name="Puri V."/>
            <person name="Reese M.G."/>
            <person name="Reinert K."/>
            <person name="Remington K."/>
            <person name="Saunders R.D.C."/>
            <person name="Scheeler F."/>
            <person name="Shen H."/>
            <person name="Shue B.C."/>
            <person name="Siden-Kiamos I."/>
            <person name="Simpson M."/>
            <person name="Skupski M.P."/>
            <person name="Smith T.J."/>
            <person name="Spier E."/>
            <person name="Spradling A.C."/>
            <person name="Stapleton M."/>
            <person name="Strong R."/>
            <person name="Sun E."/>
            <person name="Svirskas R."/>
            <person name="Tector C."/>
            <person name="Turner R."/>
            <person name="Venter E."/>
            <person name="Wang A.H."/>
            <person name="Wang X."/>
            <person name="Wang Z.-Y."/>
            <person name="Wassarman D.A."/>
            <person name="Weinstock G.M."/>
            <person name="Weissenbach J."/>
            <person name="Williams S.M."/>
            <person name="Woodage T."/>
            <person name="Worley K.C."/>
            <person name="Wu D."/>
            <person name="Yang S."/>
            <person name="Yao Q.A."/>
            <person name="Ye J."/>
            <person name="Yeh R.-F."/>
            <person name="Zaveri J.S."/>
            <person name="Zhan M."/>
            <person name="Zhang G."/>
            <person name="Zhao Q."/>
            <person name="Zheng L."/>
            <person name="Zheng X.H."/>
            <person name="Zhong F.N."/>
            <person name="Zhong W."/>
            <person name="Zhou X."/>
            <person name="Zhu S.C."/>
            <person name="Zhu X."/>
            <person name="Smith H.O."/>
            <person name="Gibbs R.A."/>
            <person name="Myers E.W."/>
            <person name="Rubin G.M."/>
            <person name="Venter J.C."/>
        </authorList>
    </citation>
    <scope>NUCLEOTIDE SEQUENCE [LARGE SCALE GENOMIC DNA]</scope>
    <source>
        <strain>Berkeley</strain>
    </source>
</reference>
<reference key="2">
    <citation type="journal article" date="2002" name="Genome Biol.">
        <title>Annotation of the Drosophila melanogaster euchromatic genome: a systematic review.</title>
        <authorList>
            <person name="Misra S."/>
            <person name="Crosby M.A."/>
            <person name="Mungall C.J."/>
            <person name="Matthews B.B."/>
            <person name="Campbell K.S."/>
            <person name="Hradecky P."/>
            <person name="Huang Y."/>
            <person name="Kaminker J.S."/>
            <person name="Millburn G.H."/>
            <person name="Prochnik S.E."/>
            <person name="Smith C.D."/>
            <person name="Tupy J.L."/>
            <person name="Whitfield E.J."/>
            <person name="Bayraktaroglu L."/>
            <person name="Berman B.P."/>
            <person name="Bettencourt B.R."/>
            <person name="Celniker S.E."/>
            <person name="de Grey A.D.N.J."/>
            <person name="Drysdale R.A."/>
            <person name="Harris N.L."/>
            <person name="Richter J."/>
            <person name="Russo S."/>
            <person name="Schroeder A.J."/>
            <person name="Shu S.Q."/>
            <person name="Stapleton M."/>
            <person name="Yamada C."/>
            <person name="Ashburner M."/>
            <person name="Gelbart W.M."/>
            <person name="Rubin G.M."/>
            <person name="Lewis S.E."/>
        </authorList>
    </citation>
    <scope>GENOME REANNOTATION</scope>
    <source>
        <strain>Berkeley</strain>
    </source>
</reference>
<reference key="3">
    <citation type="journal article" date="2002" name="Genome Biol.">
        <title>A Drosophila full-length cDNA resource.</title>
        <authorList>
            <person name="Stapleton M."/>
            <person name="Carlson J.W."/>
            <person name="Brokstein P."/>
            <person name="Yu C."/>
            <person name="Champe M."/>
            <person name="George R.A."/>
            <person name="Guarin H."/>
            <person name="Kronmiller B."/>
            <person name="Pacleb J.M."/>
            <person name="Park S."/>
            <person name="Wan K.H."/>
            <person name="Rubin G.M."/>
            <person name="Celniker S.E."/>
        </authorList>
    </citation>
    <scope>NUCLEOTIDE SEQUENCE [LARGE SCALE MRNA]</scope>
    <source>
        <strain>Berkeley</strain>
        <tissue>Embryo</tissue>
    </source>
</reference>
<reference key="4">
    <citation type="submission" date="1998-11" db="EMBL/GenBank/DDBJ databases">
        <title>Telomere swapping alters chromosomal properties.</title>
        <authorList>
            <person name="Wallrath L.L."/>
            <person name="Cryderman D.E."/>
            <person name="Morris E.J."/>
            <person name="Pavlova M."/>
            <person name="Biessmann H."/>
            <person name="Levis R.W."/>
            <person name="Elgin S.C.R."/>
        </authorList>
    </citation>
    <scope>NUCLEOTIDE SEQUENCE [GENOMIC DNA] OF 76-290</scope>
</reference>
<reference key="5">
    <citation type="journal article" date="2008" name="J. Proteome Res.">
        <title>Phosphoproteome analysis of Drosophila melanogaster embryos.</title>
        <authorList>
            <person name="Zhai B."/>
            <person name="Villen J."/>
            <person name="Beausoleil S.A."/>
            <person name="Mintseris J."/>
            <person name="Gygi S.P."/>
        </authorList>
    </citation>
    <scope>PHOSPHORYLATION [LARGE SCALE ANALYSIS] AT SER-616</scope>
    <scope>IDENTIFICATION BY MASS SPECTROMETRY</scope>
    <source>
        <tissue>Embryo</tissue>
    </source>
</reference>
<organism>
    <name type="scientific">Drosophila melanogaster</name>
    <name type="common">Fruit fly</name>
    <dbReference type="NCBI Taxonomy" id="7227"/>
    <lineage>
        <taxon>Eukaryota</taxon>
        <taxon>Metazoa</taxon>
        <taxon>Ecdysozoa</taxon>
        <taxon>Arthropoda</taxon>
        <taxon>Hexapoda</taxon>
        <taxon>Insecta</taxon>
        <taxon>Pterygota</taxon>
        <taxon>Neoptera</taxon>
        <taxon>Endopterygota</taxon>
        <taxon>Diptera</taxon>
        <taxon>Brachycera</taxon>
        <taxon>Muscomorpha</taxon>
        <taxon>Ephydroidea</taxon>
        <taxon>Drosophilidae</taxon>
        <taxon>Drosophila</taxon>
        <taxon>Sophophora</taxon>
    </lineage>
</organism>
<proteinExistence type="evidence at protein level"/>
<gene>
    <name type="primary">Dyrk3</name>
    <name type="ORF">CG40478</name>
</gene>
<keyword id="KW-0067">ATP-binding</keyword>
<keyword id="KW-0418">Kinase</keyword>
<keyword id="KW-0547">Nucleotide-binding</keyword>
<keyword id="KW-0597">Phosphoprotein</keyword>
<keyword id="KW-1185">Reference proteome</keyword>
<keyword id="KW-0723">Serine/threonine-protein kinase</keyword>
<keyword id="KW-0808">Transferase</keyword>
<keyword id="KW-0829">Tyrosine-protein kinase</keyword>
<accession>P83102</accession>
<accession>A4V144</accession>
<accession>Q2PDL5</accession>
<accession>Q5LJP2</accession>
<accession>Q8MT39</accession>
<accession>Q9Y1N4</accession>